<accession>A3D547</accession>
<evidence type="ECO:0000255" key="1">
    <source>
        <dbReference type="HAMAP-Rule" id="MF_01690"/>
    </source>
</evidence>
<evidence type="ECO:0000305" key="2"/>
<keyword id="KW-0028">Amino-acid biosynthesis</keyword>
<keyword id="KW-0170">Cobalt</keyword>
<keyword id="KW-0220">Diaminopimelate biosynthesis</keyword>
<keyword id="KW-0378">Hydrolase</keyword>
<keyword id="KW-0457">Lysine biosynthesis</keyword>
<keyword id="KW-0479">Metal-binding</keyword>
<keyword id="KW-1185">Reference proteome</keyword>
<keyword id="KW-0862">Zinc</keyword>
<organism>
    <name type="scientific">Shewanella baltica (strain OS155 / ATCC BAA-1091)</name>
    <dbReference type="NCBI Taxonomy" id="325240"/>
    <lineage>
        <taxon>Bacteria</taxon>
        <taxon>Pseudomonadati</taxon>
        <taxon>Pseudomonadota</taxon>
        <taxon>Gammaproteobacteria</taxon>
        <taxon>Alteromonadales</taxon>
        <taxon>Shewanellaceae</taxon>
        <taxon>Shewanella</taxon>
    </lineage>
</organism>
<protein>
    <recommendedName>
        <fullName evidence="1">Succinyl-diaminopimelate desuccinylase</fullName>
        <shortName evidence="1">SDAP desuccinylase</shortName>
        <ecNumber evidence="1">3.5.1.18</ecNumber>
    </recommendedName>
    <alternativeName>
        <fullName evidence="1">N-succinyl-LL-2,6-diaminoheptanedioate amidohydrolase</fullName>
    </alternativeName>
</protein>
<name>DAPE_SHEB5</name>
<comment type="function">
    <text evidence="1">Catalyzes the hydrolysis of N-succinyl-L,L-diaminopimelic acid (SDAP), forming succinate and LL-2,6-diaminopimelate (DAP), an intermediate involved in the bacterial biosynthesis of lysine and meso-diaminopimelic acid, an essential component of bacterial cell walls.</text>
</comment>
<comment type="catalytic activity">
    <reaction evidence="1">
        <text>N-succinyl-(2S,6S)-2,6-diaminopimelate + H2O = (2S,6S)-2,6-diaminopimelate + succinate</text>
        <dbReference type="Rhea" id="RHEA:22608"/>
        <dbReference type="ChEBI" id="CHEBI:15377"/>
        <dbReference type="ChEBI" id="CHEBI:30031"/>
        <dbReference type="ChEBI" id="CHEBI:57609"/>
        <dbReference type="ChEBI" id="CHEBI:58087"/>
        <dbReference type="EC" id="3.5.1.18"/>
    </reaction>
</comment>
<comment type="cofactor">
    <cofactor evidence="1">
        <name>Zn(2+)</name>
        <dbReference type="ChEBI" id="CHEBI:29105"/>
    </cofactor>
    <cofactor evidence="1">
        <name>Co(2+)</name>
        <dbReference type="ChEBI" id="CHEBI:48828"/>
    </cofactor>
    <text evidence="1">Binds 2 Zn(2+) or Co(2+) ions per subunit.</text>
</comment>
<comment type="pathway">
    <text evidence="1">Amino-acid biosynthesis; L-lysine biosynthesis via DAP pathway; LL-2,6-diaminopimelate from (S)-tetrahydrodipicolinate (succinylase route): step 3/3.</text>
</comment>
<comment type="subunit">
    <text evidence="1">Homodimer.</text>
</comment>
<comment type="similarity">
    <text evidence="1">Belongs to the peptidase M20A family. DapE subfamily.</text>
</comment>
<comment type="sequence caution" evidence="2">
    <conflict type="erroneous initiation">
        <sequence resource="EMBL-CDS" id="ABN61860"/>
    </conflict>
</comment>
<feature type="chain" id="PRO_0000375726" description="Succinyl-diaminopimelate desuccinylase">
    <location>
        <begin position="1"/>
        <end position="379"/>
    </location>
</feature>
<feature type="active site" evidence="1">
    <location>
        <position position="72"/>
    </location>
</feature>
<feature type="active site" description="Proton acceptor" evidence="1">
    <location>
        <position position="137"/>
    </location>
</feature>
<feature type="binding site" evidence="1">
    <location>
        <position position="70"/>
    </location>
    <ligand>
        <name>Zn(2+)</name>
        <dbReference type="ChEBI" id="CHEBI:29105"/>
        <label>1</label>
    </ligand>
</feature>
<feature type="binding site" evidence="1">
    <location>
        <position position="103"/>
    </location>
    <ligand>
        <name>Zn(2+)</name>
        <dbReference type="ChEBI" id="CHEBI:29105"/>
        <label>1</label>
    </ligand>
</feature>
<feature type="binding site" evidence="1">
    <location>
        <position position="103"/>
    </location>
    <ligand>
        <name>Zn(2+)</name>
        <dbReference type="ChEBI" id="CHEBI:29105"/>
        <label>2</label>
    </ligand>
</feature>
<feature type="binding site" evidence="1">
    <location>
        <position position="138"/>
    </location>
    <ligand>
        <name>Zn(2+)</name>
        <dbReference type="ChEBI" id="CHEBI:29105"/>
        <label>2</label>
    </ligand>
</feature>
<feature type="binding site" evidence="1">
    <location>
        <position position="166"/>
    </location>
    <ligand>
        <name>Zn(2+)</name>
        <dbReference type="ChEBI" id="CHEBI:29105"/>
        <label>1</label>
    </ligand>
</feature>
<feature type="binding site" evidence="1">
    <location>
        <position position="352"/>
    </location>
    <ligand>
        <name>Zn(2+)</name>
        <dbReference type="ChEBI" id="CHEBI:29105"/>
        <label>2</label>
    </ligand>
</feature>
<gene>
    <name evidence="1" type="primary">dapE</name>
    <name type="ordered locus">Sbal_2367</name>
</gene>
<sequence length="379" mass="41128">MPADDYPVTELTKALIARPSVTPLDEGCQTLMAERLSAIGFNIEPMVFEDTTNMWARRGNEGPVFCFAGHTDVVPTGDVSRWHTPPFVPTIIDGYLYGRGAADMKGSLAAMVIATECFVAKHPDHNGSIAFLITSDEEGPFINGTTRVIDTLEARNEKITWALVGEPSSTLKLGDVVKNGRRGSLTGNLTVKGIQGHVAYPHLADNPIHKAAPFLAELSQMHWDNGNEFFPPTSFQIANINGGTGASNVIPGALDVMFNFRYSTEVTADILIERVEALLKAHELDYDISWIFNGLPFLTGDGPLLDATRIAIRQVTGYETDPQTTGGTSDGRFIAPTGAKVLELGPVNATIHKVNECVKVDDLEQLALCYEVILEQLLC</sequence>
<reference key="1">
    <citation type="submission" date="2007-02" db="EMBL/GenBank/DDBJ databases">
        <title>Complete sequence of chromosome of Shewanella baltica OS155.</title>
        <authorList>
            <consortium name="US DOE Joint Genome Institute"/>
            <person name="Copeland A."/>
            <person name="Lucas S."/>
            <person name="Lapidus A."/>
            <person name="Barry K."/>
            <person name="Detter J.C."/>
            <person name="Glavina del Rio T."/>
            <person name="Hammon N."/>
            <person name="Israni S."/>
            <person name="Dalin E."/>
            <person name="Tice H."/>
            <person name="Pitluck S."/>
            <person name="Sims D.R."/>
            <person name="Brettin T."/>
            <person name="Bruce D."/>
            <person name="Han C."/>
            <person name="Tapia R."/>
            <person name="Brainard J."/>
            <person name="Schmutz J."/>
            <person name="Larimer F."/>
            <person name="Land M."/>
            <person name="Hauser L."/>
            <person name="Kyrpides N."/>
            <person name="Mikhailova N."/>
            <person name="Brettar I."/>
            <person name="Klappenbach J."/>
            <person name="Konstantinidis K."/>
            <person name="Rodrigues J."/>
            <person name="Tiedje J."/>
            <person name="Richardson P."/>
        </authorList>
    </citation>
    <scope>NUCLEOTIDE SEQUENCE [LARGE SCALE GENOMIC DNA]</scope>
    <source>
        <strain>OS155 / ATCC BAA-1091</strain>
    </source>
</reference>
<dbReference type="EC" id="3.5.1.18" evidence="1"/>
<dbReference type="EMBL" id="CP000563">
    <property type="protein sequence ID" value="ABN61860.1"/>
    <property type="status" value="ALT_INIT"/>
    <property type="molecule type" value="Genomic_DNA"/>
</dbReference>
<dbReference type="RefSeq" id="WP_190272051.1">
    <property type="nucleotide sequence ID" value="NC_009052.1"/>
</dbReference>
<dbReference type="SMR" id="A3D547"/>
<dbReference type="STRING" id="325240.Sbal_2367"/>
<dbReference type="KEGG" id="sbl:Sbal_2367"/>
<dbReference type="HOGENOM" id="CLU_021802_4_0_6"/>
<dbReference type="UniPathway" id="UPA00034">
    <property type="reaction ID" value="UER00021"/>
</dbReference>
<dbReference type="Proteomes" id="UP000001557">
    <property type="component" value="Chromosome"/>
</dbReference>
<dbReference type="GO" id="GO:0008777">
    <property type="term" value="F:acetylornithine deacetylase activity"/>
    <property type="evidence" value="ECO:0007669"/>
    <property type="project" value="TreeGrafter"/>
</dbReference>
<dbReference type="GO" id="GO:0050897">
    <property type="term" value="F:cobalt ion binding"/>
    <property type="evidence" value="ECO:0007669"/>
    <property type="project" value="UniProtKB-UniRule"/>
</dbReference>
<dbReference type="GO" id="GO:0009014">
    <property type="term" value="F:succinyl-diaminopimelate desuccinylase activity"/>
    <property type="evidence" value="ECO:0007669"/>
    <property type="project" value="UniProtKB-UniRule"/>
</dbReference>
<dbReference type="GO" id="GO:0008270">
    <property type="term" value="F:zinc ion binding"/>
    <property type="evidence" value="ECO:0007669"/>
    <property type="project" value="UniProtKB-UniRule"/>
</dbReference>
<dbReference type="GO" id="GO:0019877">
    <property type="term" value="P:diaminopimelate biosynthetic process"/>
    <property type="evidence" value="ECO:0007669"/>
    <property type="project" value="UniProtKB-UniRule"/>
</dbReference>
<dbReference type="GO" id="GO:0006526">
    <property type="term" value="P:L-arginine biosynthetic process"/>
    <property type="evidence" value="ECO:0007669"/>
    <property type="project" value="TreeGrafter"/>
</dbReference>
<dbReference type="GO" id="GO:0009089">
    <property type="term" value="P:lysine biosynthetic process via diaminopimelate"/>
    <property type="evidence" value="ECO:0007669"/>
    <property type="project" value="UniProtKB-UniRule"/>
</dbReference>
<dbReference type="CDD" id="cd03891">
    <property type="entry name" value="M20_DapE_proteobac"/>
    <property type="match status" value="1"/>
</dbReference>
<dbReference type="FunFam" id="3.30.70.360:FF:000011">
    <property type="entry name" value="Succinyl-diaminopimelate desuccinylase"/>
    <property type="match status" value="1"/>
</dbReference>
<dbReference type="FunFam" id="3.40.630.10:FF:000005">
    <property type="entry name" value="Succinyl-diaminopimelate desuccinylase"/>
    <property type="match status" value="1"/>
</dbReference>
<dbReference type="Gene3D" id="3.40.630.10">
    <property type="entry name" value="Zn peptidases"/>
    <property type="match status" value="2"/>
</dbReference>
<dbReference type="HAMAP" id="MF_01690">
    <property type="entry name" value="DapE"/>
    <property type="match status" value="1"/>
</dbReference>
<dbReference type="InterPro" id="IPR001261">
    <property type="entry name" value="ArgE/DapE_CS"/>
</dbReference>
<dbReference type="InterPro" id="IPR036264">
    <property type="entry name" value="Bact_exopeptidase_dim_dom"/>
</dbReference>
<dbReference type="InterPro" id="IPR005941">
    <property type="entry name" value="DapE_proteobac"/>
</dbReference>
<dbReference type="InterPro" id="IPR002933">
    <property type="entry name" value="Peptidase_M20"/>
</dbReference>
<dbReference type="InterPro" id="IPR011650">
    <property type="entry name" value="Peptidase_M20_dimer"/>
</dbReference>
<dbReference type="InterPro" id="IPR050072">
    <property type="entry name" value="Peptidase_M20A"/>
</dbReference>
<dbReference type="NCBIfam" id="TIGR01246">
    <property type="entry name" value="dapE_proteo"/>
    <property type="match status" value="1"/>
</dbReference>
<dbReference type="NCBIfam" id="NF009557">
    <property type="entry name" value="PRK13009.1"/>
    <property type="match status" value="1"/>
</dbReference>
<dbReference type="PANTHER" id="PTHR43808">
    <property type="entry name" value="ACETYLORNITHINE DEACETYLASE"/>
    <property type="match status" value="1"/>
</dbReference>
<dbReference type="PANTHER" id="PTHR43808:SF31">
    <property type="entry name" value="N-ACETYL-L-CITRULLINE DEACETYLASE"/>
    <property type="match status" value="1"/>
</dbReference>
<dbReference type="Pfam" id="PF07687">
    <property type="entry name" value="M20_dimer"/>
    <property type="match status" value="1"/>
</dbReference>
<dbReference type="Pfam" id="PF01546">
    <property type="entry name" value="Peptidase_M20"/>
    <property type="match status" value="1"/>
</dbReference>
<dbReference type="SUPFAM" id="SSF55031">
    <property type="entry name" value="Bacterial exopeptidase dimerisation domain"/>
    <property type="match status" value="1"/>
</dbReference>
<dbReference type="SUPFAM" id="SSF53187">
    <property type="entry name" value="Zn-dependent exopeptidases"/>
    <property type="match status" value="1"/>
</dbReference>
<dbReference type="PROSITE" id="PS00759">
    <property type="entry name" value="ARGE_DAPE_CPG2_2"/>
    <property type="match status" value="1"/>
</dbReference>
<proteinExistence type="inferred from homology"/>